<gene>
    <name evidence="1" type="primary">glyS</name>
    <name type="ordered locus">TK0978</name>
</gene>
<keyword id="KW-0030">Aminoacyl-tRNA synthetase</keyword>
<keyword id="KW-0067">ATP-binding</keyword>
<keyword id="KW-0963">Cytoplasm</keyword>
<keyword id="KW-0436">Ligase</keyword>
<keyword id="KW-0547">Nucleotide-binding</keyword>
<keyword id="KW-0648">Protein biosynthesis</keyword>
<keyword id="KW-1185">Reference proteome</keyword>
<evidence type="ECO:0000255" key="1">
    <source>
        <dbReference type="HAMAP-Rule" id="MF_00253"/>
    </source>
</evidence>
<protein>
    <recommendedName>
        <fullName evidence="1">Glycine--tRNA ligase</fullName>
        <ecNumber evidence="1">6.1.1.14</ecNumber>
    </recommendedName>
    <alternativeName>
        <fullName evidence="1">Glycyl-tRNA synthetase</fullName>
        <shortName evidence="1">GlyRS</shortName>
    </alternativeName>
</protein>
<comment type="function">
    <text evidence="1">Catalyzes the attachment of glycine to tRNA(Gly).</text>
</comment>
<comment type="catalytic activity">
    <reaction evidence="1">
        <text>tRNA(Gly) + glycine + ATP = glycyl-tRNA(Gly) + AMP + diphosphate</text>
        <dbReference type="Rhea" id="RHEA:16013"/>
        <dbReference type="Rhea" id="RHEA-COMP:9664"/>
        <dbReference type="Rhea" id="RHEA-COMP:9683"/>
        <dbReference type="ChEBI" id="CHEBI:30616"/>
        <dbReference type="ChEBI" id="CHEBI:33019"/>
        <dbReference type="ChEBI" id="CHEBI:57305"/>
        <dbReference type="ChEBI" id="CHEBI:78442"/>
        <dbReference type="ChEBI" id="CHEBI:78522"/>
        <dbReference type="ChEBI" id="CHEBI:456215"/>
        <dbReference type="EC" id="6.1.1.14"/>
    </reaction>
</comment>
<comment type="subcellular location">
    <subcellularLocation>
        <location>Cytoplasm</location>
    </subcellularLocation>
</comment>
<comment type="similarity">
    <text evidence="1">Belongs to the class-II aminoacyl-tRNA synthetase family.</text>
</comment>
<sequence length="570" mass="66680">MGEKPDKYEILQDLMRRRGFAWGSFEIYGGSRGFYDYGPLGATIKRKIERKIREAFQREGFFELETPDITPEKVFIASGHVEKFVDPLVECKKCGARFRADHLVEEALGIDTEGMSAEHLTQLIREHDIRCPECGGELSDVWYFNLMFETRIGPYGDQKGYLRPETAQGIFVNFRRLNAFARNKLPFGVFQIGKAYRNEISPRQGMLRLREFTQAEAEIFFNPNETEHPHFDEVKDEKLRLYPIEHQLKNLSMIELTAEEAVKKGYIMNTFFAYYMVMVKRVLLDIGIPEDKIRFRQQLPEERAHYSRDTWDAEIHSERFGWVECVGIANRGDYDLSRHMRESGADLTVLIHYDEPKIVKKLEVSLNMKRVGPKLKKDAKRINELIKGWGEEKKRELVELLEKEGKVTIEGYELEKDDFIIREVEEKITGEKIVPHVLEPSFGIDRPFYLLLENSLVIEEDRTYLRIKKDMAPIEVAVLPLVAKEPLKSIAYDIFRTLQKEGFIAVYDEKDTVGRRYMRYDEIGTPYCVTVDNQTPEDGTVTIRDRDTREQIRVKIEELPKKLRELIFES</sequence>
<accession>Q5JID8</accession>
<reference key="1">
    <citation type="journal article" date="2005" name="Genome Res.">
        <title>Complete genome sequence of the hyperthermophilic archaeon Thermococcus kodakaraensis KOD1 and comparison with Pyrococcus genomes.</title>
        <authorList>
            <person name="Fukui T."/>
            <person name="Atomi H."/>
            <person name="Kanai T."/>
            <person name="Matsumi R."/>
            <person name="Fujiwara S."/>
            <person name="Imanaka T."/>
        </authorList>
    </citation>
    <scope>NUCLEOTIDE SEQUENCE [LARGE SCALE GENOMIC DNA]</scope>
    <source>
        <strain>ATCC BAA-918 / JCM 12380 / KOD1</strain>
    </source>
</reference>
<dbReference type="EC" id="6.1.1.14" evidence="1"/>
<dbReference type="EMBL" id="AP006878">
    <property type="protein sequence ID" value="BAD85167.1"/>
    <property type="molecule type" value="Genomic_DNA"/>
</dbReference>
<dbReference type="RefSeq" id="WP_011249929.1">
    <property type="nucleotide sequence ID" value="NC_006624.1"/>
</dbReference>
<dbReference type="SMR" id="Q5JID8"/>
<dbReference type="FunCoup" id="Q5JID8">
    <property type="interactions" value="189"/>
</dbReference>
<dbReference type="IntAct" id="Q5JID8">
    <property type="interactions" value="1"/>
</dbReference>
<dbReference type="MINT" id="Q5JID8"/>
<dbReference type="STRING" id="69014.TK0978"/>
<dbReference type="EnsemblBacteria" id="BAD85167">
    <property type="protein sequence ID" value="BAD85167"/>
    <property type="gene ID" value="TK0978"/>
</dbReference>
<dbReference type="GeneID" id="78447491"/>
<dbReference type="KEGG" id="tko:TK0978"/>
<dbReference type="PATRIC" id="fig|69014.16.peg.956"/>
<dbReference type="eggNOG" id="arCOG00405">
    <property type="taxonomic scope" value="Archaea"/>
</dbReference>
<dbReference type="HOGENOM" id="CLU_015515_1_0_2"/>
<dbReference type="InParanoid" id="Q5JID8"/>
<dbReference type="OrthoDB" id="6113at2157"/>
<dbReference type="PhylomeDB" id="Q5JID8"/>
<dbReference type="Proteomes" id="UP000000536">
    <property type="component" value="Chromosome"/>
</dbReference>
<dbReference type="GO" id="GO:0005737">
    <property type="term" value="C:cytoplasm"/>
    <property type="evidence" value="ECO:0000318"/>
    <property type="project" value="GO_Central"/>
</dbReference>
<dbReference type="GO" id="GO:0005524">
    <property type="term" value="F:ATP binding"/>
    <property type="evidence" value="ECO:0007669"/>
    <property type="project" value="UniProtKB-UniRule"/>
</dbReference>
<dbReference type="GO" id="GO:0004820">
    <property type="term" value="F:glycine-tRNA ligase activity"/>
    <property type="evidence" value="ECO:0000250"/>
    <property type="project" value="UniProtKB"/>
</dbReference>
<dbReference type="GO" id="GO:0046983">
    <property type="term" value="F:protein dimerization activity"/>
    <property type="evidence" value="ECO:0000250"/>
    <property type="project" value="UniProtKB"/>
</dbReference>
<dbReference type="GO" id="GO:0006426">
    <property type="term" value="P:glycyl-tRNA aminoacylation"/>
    <property type="evidence" value="ECO:0000318"/>
    <property type="project" value="GO_Central"/>
</dbReference>
<dbReference type="CDD" id="cd00774">
    <property type="entry name" value="GlyRS-like_core"/>
    <property type="match status" value="1"/>
</dbReference>
<dbReference type="CDD" id="cd00858">
    <property type="entry name" value="GlyRS_anticodon"/>
    <property type="match status" value="1"/>
</dbReference>
<dbReference type="FunFam" id="3.30.930.10:FF:000179">
    <property type="entry name" value="Glycine--tRNA ligase"/>
    <property type="match status" value="1"/>
</dbReference>
<dbReference type="FunFam" id="3.40.50.800:FF:000002">
    <property type="entry name" value="Glycine--tRNA ligase"/>
    <property type="match status" value="1"/>
</dbReference>
<dbReference type="Gene3D" id="3.30.720.200">
    <property type="match status" value="1"/>
</dbReference>
<dbReference type="Gene3D" id="3.40.50.800">
    <property type="entry name" value="Anticodon-binding domain"/>
    <property type="match status" value="1"/>
</dbReference>
<dbReference type="Gene3D" id="3.30.930.10">
    <property type="entry name" value="Bira Bifunctional Protein, Domain 2"/>
    <property type="match status" value="1"/>
</dbReference>
<dbReference type="HAMAP" id="MF_00253_A">
    <property type="entry name" value="Gly_tRNA_synth_A"/>
    <property type="match status" value="1"/>
</dbReference>
<dbReference type="InterPro" id="IPR002314">
    <property type="entry name" value="aa-tRNA-synt_IIb"/>
</dbReference>
<dbReference type="InterPro" id="IPR006195">
    <property type="entry name" value="aa-tRNA-synth_II"/>
</dbReference>
<dbReference type="InterPro" id="IPR045864">
    <property type="entry name" value="aa-tRNA-synth_II/BPL/LPL"/>
</dbReference>
<dbReference type="InterPro" id="IPR004154">
    <property type="entry name" value="Anticodon-bd"/>
</dbReference>
<dbReference type="InterPro" id="IPR036621">
    <property type="entry name" value="Anticodon-bd_dom_sf"/>
</dbReference>
<dbReference type="InterPro" id="IPR027031">
    <property type="entry name" value="Gly-tRNA_synthase/POLG2"/>
</dbReference>
<dbReference type="InterPro" id="IPR022960">
    <property type="entry name" value="Gly_tRNA_ligase_arc"/>
</dbReference>
<dbReference type="InterPro" id="IPR033731">
    <property type="entry name" value="GlyRS-like_core"/>
</dbReference>
<dbReference type="InterPro" id="IPR002315">
    <property type="entry name" value="tRNA-synt_gly"/>
</dbReference>
<dbReference type="NCBIfam" id="TIGR00389">
    <property type="entry name" value="glyS_dimeric"/>
    <property type="match status" value="1"/>
</dbReference>
<dbReference type="NCBIfam" id="NF003211">
    <property type="entry name" value="PRK04173.1"/>
    <property type="match status" value="1"/>
</dbReference>
<dbReference type="PANTHER" id="PTHR10745:SF0">
    <property type="entry name" value="GLYCINE--TRNA LIGASE"/>
    <property type="match status" value="1"/>
</dbReference>
<dbReference type="PANTHER" id="PTHR10745">
    <property type="entry name" value="GLYCYL-TRNA SYNTHETASE/DNA POLYMERASE SUBUNIT GAMMA-2"/>
    <property type="match status" value="1"/>
</dbReference>
<dbReference type="Pfam" id="PF03129">
    <property type="entry name" value="HGTP_anticodon"/>
    <property type="match status" value="1"/>
</dbReference>
<dbReference type="Pfam" id="PF00587">
    <property type="entry name" value="tRNA-synt_2b"/>
    <property type="match status" value="1"/>
</dbReference>
<dbReference type="PRINTS" id="PR01043">
    <property type="entry name" value="TRNASYNTHGLY"/>
</dbReference>
<dbReference type="SUPFAM" id="SSF52954">
    <property type="entry name" value="Class II aaRS ABD-related"/>
    <property type="match status" value="1"/>
</dbReference>
<dbReference type="SUPFAM" id="SSF55681">
    <property type="entry name" value="Class II aaRS and biotin synthetases"/>
    <property type="match status" value="1"/>
</dbReference>
<dbReference type="PROSITE" id="PS50862">
    <property type="entry name" value="AA_TRNA_LIGASE_II"/>
    <property type="match status" value="1"/>
</dbReference>
<feature type="chain" id="PRO_0000072997" description="Glycine--tRNA ligase">
    <location>
        <begin position="1"/>
        <end position="570"/>
    </location>
</feature>
<feature type="binding site" evidence="1">
    <location>
        <position position="99"/>
    </location>
    <ligand>
        <name>substrate</name>
    </ligand>
</feature>
<feature type="binding site" evidence="1">
    <location>
        <position position="165"/>
    </location>
    <ligand>
        <name>substrate</name>
    </ligand>
</feature>
<feature type="binding site" evidence="1">
    <location>
        <begin position="197"/>
        <end position="199"/>
    </location>
    <ligand>
        <name>ATP</name>
        <dbReference type="ChEBI" id="CHEBI:30616"/>
    </ligand>
</feature>
<feature type="binding site" evidence="1">
    <location>
        <begin position="207"/>
        <end position="212"/>
    </location>
    <ligand>
        <name>ATP</name>
        <dbReference type="ChEBI" id="CHEBI:30616"/>
    </ligand>
</feature>
<feature type="binding site" evidence="1">
    <location>
        <begin position="212"/>
        <end position="216"/>
    </location>
    <ligand>
        <name>substrate</name>
    </ligand>
</feature>
<feature type="binding site" evidence="1">
    <location>
        <begin position="324"/>
        <end position="325"/>
    </location>
    <ligand>
        <name>ATP</name>
        <dbReference type="ChEBI" id="CHEBI:30616"/>
    </ligand>
</feature>
<feature type="binding site" evidence="1">
    <location>
        <begin position="439"/>
        <end position="443"/>
    </location>
    <ligand>
        <name>substrate</name>
    </ligand>
</feature>
<feature type="binding site" evidence="1">
    <location>
        <begin position="443"/>
        <end position="446"/>
    </location>
    <ligand>
        <name>ATP</name>
        <dbReference type="ChEBI" id="CHEBI:30616"/>
    </ligand>
</feature>
<proteinExistence type="inferred from homology"/>
<name>SYG_THEKO</name>
<organism>
    <name type="scientific">Thermococcus kodakarensis (strain ATCC BAA-918 / JCM 12380 / KOD1)</name>
    <name type="common">Pyrococcus kodakaraensis (strain KOD1)</name>
    <dbReference type="NCBI Taxonomy" id="69014"/>
    <lineage>
        <taxon>Archaea</taxon>
        <taxon>Methanobacteriati</taxon>
        <taxon>Methanobacteriota</taxon>
        <taxon>Thermococci</taxon>
        <taxon>Thermococcales</taxon>
        <taxon>Thermococcaceae</taxon>
        <taxon>Thermococcus</taxon>
    </lineage>
</organism>